<accession>B4T6G9</accession>
<name>RS20_SALNS</name>
<feature type="chain" id="PRO_1000126509" description="Small ribosomal subunit protein bS20">
    <location>
        <begin position="1"/>
        <end position="87"/>
    </location>
</feature>
<feature type="region of interest" description="Disordered" evidence="2">
    <location>
        <begin position="1"/>
        <end position="26"/>
    </location>
</feature>
<keyword id="KW-0687">Ribonucleoprotein</keyword>
<keyword id="KW-0689">Ribosomal protein</keyword>
<keyword id="KW-0694">RNA-binding</keyword>
<keyword id="KW-0699">rRNA-binding</keyword>
<dbReference type="EMBL" id="CP001113">
    <property type="protein sequence ID" value="ACF62993.1"/>
    <property type="molecule type" value="Genomic_DNA"/>
</dbReference>
<dbReference type="RefSeq" id="WP_001518655.1">
    <property type="nucleotide sequence ID" value="NZ_CCMR01000003.1"/>
</dbReference>
<dbReference type="SMR" id="B4T6G9"/>
<dbReference type="GeneID" id="93310349"/>
<dbReference type="KEGG" id="see:SNSL254_A0047"/>
<dbReference type="HOGENOM" id="CLU_160655_4_0_6"/>
<dbReference type="Proteomes" id="UP000008824">
    <property type="component" value="Chromosome"/>
</dbReference>
<dbReference type="GO" id="GO:0005829">
    <property type="term" value="C:cytosol"/>
    <property type="evidence" value="ECO:0007669"/>
    <property type="project" value="TreeGrafter"/>
</dbReference>
<dbReference type="GO" id="GO:0015935">
    <property type="term" value="C:small ribosomal subunit"/>
    <property type="evidence" value="ECO:0007669"/>
    <property type="project" value="TreeGrafter"/>
</dbReference>
<dbReference type="GO" id="GO:0070181">
    <property type="term" value="F:small ribosomal subunit rRNA binding"/>
    <property type="evidence" value="ECO:0007669"/>
    <property type="project" value="TreeGrafter"/>
</dbReference>
<dbReference type="GO" id="GO:0003735">
    <property type="term" value="F:structural constituent of ribosome"/>
    <property type="evidence" value="ECO:0007669"/>
    <property type="project" value="InterPro"/>
</dbReference>
<dbReference type="GO" id="GO:0006412">
    <property type="term" value="P:translation"/>
    <property type="evidence" value="ECO:0007669"/>
    <property type="project" value="UniProtKB-UniRule"/>
</dbReference>
<dbReference type="FunFam" id="1.20.58.110:FF:000001">
    <property type="entry name" value="30S ribosomal protein S20"/>
    <property type="match status" value="1"/>
</dbReference>
<dbReference type="Gene3D" id="1.20.58.110">
    <property type="entry name" value="Ribosomal protein S20"/>
    <property type="match status" value="1"/>
</dbReference>
<dbReference type="HAMAP" id="MF_00500">
    <property type="entry name" value="Ribosomal_bS20"/>
    <property type="match status" value="1"/>
</dbReference>
<dbReference type="InterPro" id="IPR002583">
    <property type="entry name" value="Ribosomal_bS20"/>
</dbReference>
<dbReference type="InterPro" id="IPR036510">
    <property type="entry name" value="Ribosomal_bS20_sf"/>
</dbReference>
<dbReference type="NCBIfam" id="TIGR00029">
    <property type="entry name" value="S20"/>
    <property type="match status" value="1"/>
</dbReference>
<dbReference type="PANTHER" id="PTHR33398">
    <property type="entry name" value="30S RIBOSOMAL PROTEIN S20"/>
    <property type="match status" value="1"/>
</dbReference>
<dbReference type="PANTHER" id="PTHR33398:SF1">
    <property type="entry name" value="SMALL RIBOSOMAL SUBUNIT PROTEIN BS20C"/>
    <property type="match status" value="1"/>
</dbReference>
<dbReference type="Pfam" id="PF01649">
    <property type="entry name" value="Ribosomal_S20p"/>
    <property type="match status" value="1"/>
</dbReference>
<dbReference type="SUPFAM" id="SSF46992">
    <property type="entry name" value="Ribosomal protein S20"/>
    <property type="match status" value="1"/>
</dbReference>
<comment type="function">
    <text evidence="1">Binds directly to 16S ribosomal RNA.</text>
</comment>
<comment type="similarity">
    <text evidence="1">Belongs to the bacterial ribosomal protein bS20 family.</text>
</comment>
<gene>
    <name evidence="1" type="primary">rpsT</name>
    <name type="ordered locus">SNSL254_A0047</name>
</gene>
<protein>
    <recommendedName>
        <fullName evidence="1">Small ribosomal subunit protein bS20</fullName>
    </recommendedName>
    <alternativeName>
        <fullName evidence="3">30S ribosomal protein S20</fullName>
    </alternativeName>
</protein>
<evidence type="ECO:0000255" key="1">
    <source>
        <dbReference type="HAMAP-Rule" id="MF_00500"/>
    </source>
</evidence>
<evidence type="ECO:0000256" key="2">
    <source>
        <dbReference type="SAM" id="MobiDB-lite"/>
    </source>
</evidence>
<evidence type="ECO:0000305" key="3"/>
<organism>
    <name type="scientific">Salmonella newport (strain SL254)</name>
    <dbReference type="NCBI Taxonomy" id="423368"/>
    <lineage>
        <taxon>Bacteria</taxon>
        <taxon>Pseudomonadati</taxon>
        <taxon>Pseudomonadota</taxon>
        <taxon>Gammaproteobacteria</taxon>
        <taxon>Enterobacterales</taxon>
        <taxon>Enterobacteriaceae</taxon>
        <taxon>Salmonella</taxon>
    </lineage>
</organism>
<proteinExistence type="inferred from homology"/>
<reference key="1">
    <citation type="journal article" date="2011" name="J. Bacteriol.">
        <title>Comparative genomics of 28 Salmonella enterica isolates: evidence for CRISPR-mediated adaptive sublineage evolution.</title>
        <authorList>
            <person name="Fricke W.F."/>
            <person name="Mammel M.K."/>
            <person name="McDermott P.F."/>
            <person name="Tartera C."/>
            <person name="White D.G."/>
            <person name="Leclerc J.E."/>
            <person name="Ravel J."/>
            <person name="Cebula T.A."/>
        </authorList>
    </citation>
    <scope>NUCLEOTIDE SEQUENCE [LARGE SCALE GENOMIC DNA]</scope>
    <source>
        <strain>SL254</strain>
    </source>
</reference>
<sequence length="87" mass="9655">MANIKSAKKRAVQSEKARKHNASRRSMMRTFIKKVYAAIEAGDKAAALKAFNEMQPIVDRQAAKGLIHKNKAARHKANLTAQINKLA</sequence>